<protein>
    <recommendedName>
        <fullName evidence="1">Glycerol kinase</fullName>
        <ecNumber evidence="1">2.7.1.30</ecNumber>
    </recommendedName>
    <alternativeName>
        <fullName evidence="1">ATP:glycerol 3-phosphotransferase</fullName>
    </alternativeName>
    <alternativeName>
        <fullName evidence="1">Glycerokinase</fullName>
        <shortName evidence="1">GK</shortName>
    </alternativeName>
</protein>
<dbReference type="EC" id="2.7.1.30" evidence="1"/>
<dbReference type="EMBL" id="U94356">
    <property type="protein sequence ID" value="AAB69986.1"/>
    <property type="molecule type" value="Genomic_DNA"/>
</dbReference>
<dbReference type="EMBL" id="AE016830">
    <property type="protein sequence ID" value="AAO81680.1"/>
    <property type="molecule type" value="Genomic_DNA"/>
</dbReference>
<dbReference type="RefSeq" id="NP_815610.1">
    <property type="nucleotide sequence ID" value="NC_004668.1"/>
</dbReference>
<dbReference type="RefSeq" id="WP_002357138.1">
    <property type="nucleotide sequence ID" value="NZ_KE136528.1"/>
</dbReference>
<dbReference type="SMR" id="O34154"/>
<dbReference type="STRING" id="226185.EF_1929"/>
<dbReference type="iPTMnet" id="O34154"/>
<dbReference type="EnsemblBacteria" id="AAO81680">
    <property type="protein sequence ID" value="AAO81680"/>
    <property type="gene ID" value="EF_1929"/>
</dbReference>
<dbReference type="GeneID" id="60894171"/>
<dbReference type="KEGG" id="efa:EF1929"/>
<dbReference type="PATRIC" id="fig|226185.45.peg.1590"/>
<dbReference type="eggNOG" id="COG0554">
    <property type="taxonomic scope" value="Bacteria"/>
</dbReference>
<dbReference type="HOGENOM" id="CLU_009281_2_3_9"/>
<dbReference type="SABIO-RK" id="O34154"/>
<dbReference type="UniPathway" id="UPA00618">
    <property type="reaction ID" value="UER00672"/>
</dbReference>
<dbReference type="Proteomes" id="UP000001415">
    <property type="component" value="Chromosome"/>
</dbReference>
<dbReference type="GO" id="GO:0005829">
    <property type="term" value="C:cytosol"/>
    <property type="evidence" value="ECO:0007669"/>
    <property type="project" value="TreeGrafter"/>
</dbReference>
<dbReference type="GO" id="GO:0005524">
    <property type="term" value="F:ATP binding"/>
    <property type="evidence" value="ECO:0007669"/>
    <property type="project" value="UniProtKB-UniRule"/>
</dbReference>
<dbReference type="GO" id="GO:0004370">
    <property type="term" value="F:glycerol kinase activity"/>
    <property type="evidence" value="ECO:0000250"/>
    <property type="project" value="UniProtKB"/>
</dbReference>
<dbReference type="GO" id="GO:0019563">
    <property type="term" value="P:glycerol catabolic process"/>
    <property type="evidence" value="ECO:0007669"/>
    <property type="project" value="UniProtKB-UniRule"/>
</dbReference>
<dbReference type="GO" id="GO:0006071">
    <property type="term" value="P:glycerol metabolic process"/>
    <property type="evidence" value="ECO:0000250"/>
    <property type="project" value="UniProtKB"/>
</dbReference>
<dbReference type="GO" id="GO:0006072">
    <property type="term" value="P:glycerol-3-phosphate metabolic process"/>
    <property type="evidence" value="ECO:0007669"/>
    <property type="project" value="InterPro"/>
</dbReference>
<dbReference type="CDD" id="cd07786">
    <property type="entry name" value="FGGY_EcGK_like"/>
    <property type="match status" value="1"/>
</dbReference>
<dbReference type="FunFam" id="3.30.420.40:FF:000007">
    <property type="entry name" value="Glycerol kinase"/>
    <property type="match status" value="1"/>
</dbReference>
<dbReference type="FunFam" id="3.30.420.40:FF:000008">
    <property type="entry name" value="Glycerol kinase"/>
    <property type="match status" value="1"/>
</dbReference>
<dbReference type="Gene3D" id="3.30.420.40">
    <property type="match status" value="2"/>
</dbReference>
<dbReference type="HAMAP" id="MF_00186">
    <property type="entry name" value="Glycerol_kin"/>
    <property type="match status" value="1"/>
</dbReference>
<dbReference type="InterPro" id="IPR043129">
    <property type="entry name" value="ATPase_NBD"/>
</dbReference>
<dbReference type="InterPro" id="IPR000577">
    <property type="entry name" value="Carb_kinase_FGGY"/>
</dbReference>
<dbReference type="InterPro" id="IPR018483">
    <property type="entry name" value="Carb_kinase_FGGY_CS"/>
</dbReference>
<dbReference type="InterPro" id="IPR018485">
    <property type="entry name" value="FGGY_C"/>
</dbReference>
<dbReference type="InterPro" id="IPR018484">
    <property type="entry name" value="FGGY_N"/>
</dbReference>
<dbReference type="InterPro" id="IPR005999">
    <property type="entry name" value="Glycerol_kin"/>
</dbReference>
<dbReference type="NCBIfam" id="TIGR01311">
    <property type="entry name" value="glycerol_kin"/>
    <property type="match status" value="1"/>
</dbReference>
<dbReference type="NCBIfam" id="NF000756">
    <property type="entry name" value="PRK00047.1"/>
    <property type="match status" value="1"/>
</dbReference>
<dbReference type="PANTHER" id="PTHR10196:SF69">
    <property type="entry name" value="GLYCEROL KINASE"/>
    <property type="match status" value="1"/>
</dbReference>
<dbReference type="PANTHER" id="PTHR10196">
    <property type="entry name" value="SUGAR KINASE"/>
    <property type="match status" value="1"/>
</dbReference>
<dbReference type="Pfam" id="PF02782">
    <property type="entry name" value="FGGY_C"/>
    <property type="match status" value="1"/>
</dbReference>
<dbReference type="Pfam" id="PF00370">
    <property type="entry name" value="FGGY_N"/>
    <property type="match status" value="1"/>
</dbReference>
<dbReference type="PIRSF" id="PIRSF000538">
    <property type="entry name" value="GlpK"/>
    <property type="match status" value="1"/>
</dbReference>
<dbReference type="SUPFAM" id="SSF53067">
    <property type="entry name" value="Actin-like ATPase domain"/>
    <property type="match status" value="2"/>
</dbReference>
<dbReference type="PROSITE" id="PS00933">
    <property type="entry name" value="FGGY_KINASES_1"/>
    <property type="match status" value="1"/>
</dbReference>
<dbReference type="PROSITE" id="PS00445">
    <property type="entry name" value="FGGY_KINASES_2"/>
    <property type="match status" value="1"/>
</dbReference>
<evidence type="ECO:0000255" key="1">
    <source>
        <dbReference type="HAMAP-Rule" id="MF_00186"/>
    </source>
</evidence>
<evidence type="ECO:0000269" key="2">
    <source>
    </source>
</evidence>
<evidence type="ECO:0000269" key="3">
    <source>
    </source>
</evidence>
<organism>
    <name type="scientific">Enterococcus faecalis (strain ATCC 700802 / V583)</name>
    <dbReference type="NCBI Taxonomy" id="226185"/>
    <lineage>
        <taxon>Bacteria</taxon>
        <taxon>Bacillati</taxon>
        <taxon>Bacillota</taxon>
        <taxon>Bacilli</taxon>
        <taxon>Lactobacillales</taxon>
        <taxon>Enterococcaceae</taxon>
        <taxon>Enterococcus</taxon>
    </lineage>
</organism>
<sequence length="501" mass="55443">MAEEKYIMAIDQGTTSSRAIIFDKKGNKIGSSQKEFTQYFPNAGWVEHNANEIWNSVQSVIAGSLIESGVKPTDIAGIGITNQRETTVVWDKATGLPIYNAIVWQSRQTTPIADQLKEDGYSEMIHEKTGLIIDAYFSATKVRWILDHVEGAQERAENGELMFGTIDTWLVWKLTGDTHVTDYSNASRTMLFNIHDLDWDQEILDLLNIPRVMLPKVVSNSEVYGLTKNYHFYGSEVPIAGMAGDQQAALFGQMAFEPGMVKNTYGTGSFIVMNTGEEPQLSKNNLLTTIGYGINGKVYYALEGSIFVAGSAIQWLRDGLKMLQTAAESEAVAKASTGHNEVYVVPAFTGLGAPYWDSQARGAVFGLTRGTTREDFVKATLQAVAYQVRDIIDTMKEDTGIDIPVLKVDGGAANNDFLMQFQADILNTAVQRAHNLETTALGAAFLAGLAVGFWKDLEEIKAFQEEGQQFEPIMAEEEREDLYEGWQQAVAATQQFKRKNK</sequence>
<gene>
    <name evidence="1" type="primary">glpK</name>
    <name type="ordered locus">EF_1929</name>
</gene>
<keyword id="KW-0067">ATP-binding</keyword>
<keyword id="KW-0903">Direct protein sequencing</keyword>
<keyword id="KW-0319">Glycerol metabolism</keyword>
<keyword id="KW-0418">Kinase</keyword>
<keyword id="KW-0547">Nucleotide-binding</keyword>
<keyword id="KW-0597">Phosphoprotein</keyword>
<keyword id="KW-1185">Reference proteome</keyword>
<keyword id="KW-0808">Transferase</keyword>
<reference key="1">
    <citation type="journal article" date="1997" name="J. Biol. Chem.">
        <title>Cloning and sequencing of two enterococcal glpK genes and regulation of the encoded glycerol kinases by phosphoenolpyruvate-dependent, phosphotransferase system-catalyzed phosphorylation of a single histidyl residue.</title>
        <authorList>
            <person name="Charrier V."/>
            <person name="Buckley E."/>
            <person name="Parsonage D."/>
            <person name="Galinier A."/>
            <person name="Darbon E."/>
            <person name="Jaquinod M."/>
            <person name="Forest E."/>
            <person name="Deutscher J."/>
            <person name="Claiborne A."/>
        </authorList>
    </citation>
    <scope>NUCLEOTIDE SEQUENCE [GENOMIC DNA]</scope>
    <scope>PROTEIN SEQUENCE OF 2-19</scope>
    <scope>FUNCTION</scope>
    <scope>ACTIVITY REGULATION</scope>
    <source>
        <strain>26487</strain>
    </source>
</reference>
<reference key="2">
    <citation type="journal article" date="2003" name="Science">
        <title>Role of mobile DNA in the evolution of vancomycin-resistant Enterococcus faecalis.</title>
        <authorList>
            <person name="Paulsen I.T."/>
            <person name="Banerjei L."/>
            <person name="Myers G.S.A."/>
            <person name="Nelson K.E."/>
            <person name="Seshadri R."/>
            <person name="Read T.D."/>
            <person name="Fouts D.E."/>
            <person name="Eisen J.A."/>
            <person name="Gill S.R."/>
            <person name="Heidelberg J.F."/>
            <person name="Tettelin H."/>
            <person name="Dodson R.J."/>
            <person name="Umayam L.A."/>
            <person name="Brinkac L.M."/>
            <person name="Beanan M.J."/>
            <person name="Daugherty S.C."/>
            <person name="DeBoy R.T."/>
            <person name="Durkin S.A."/>
            <person name="Kolonay J.F."/>
            <person name="Madupu R."/>
            <person name="Nelson W.C."/>
            <person name="Vamathevan J.J."/>
            <person name="Tran B."/>
            <person name="Upton J."/>
            <person name="Hansen T."/>
            <person name="Shetty J."/>
            <person name="Khouri H.M."/>
            <person name="Utterback T.R."/>
            <person name="Radune D."/>
            <person name="Ketchum K.A."/>
            <person name="Dougherty B.A."/>
            <person name="Fraser C.M."/>
        </authorList>
    </citation>
    <scope>NUCLEOTIDE SEQUENCE [LARGE SCALE GENOMIC DNA]</scope>
    <source>
        <strain>ATCC 700802 / V583</strain>
    </source>
</reference>
<reference key="3">
    <citation type="journal article" date="1986" name="J. Bacteriol.">
        <title>Stimulation of dihydroxyacetone and glycerol kinase activity in Streptococcus faecalis by phosphoenolpyruvate-dependent phosphorylation catalyzed by enzyme I and HPr of the phosphotransferase system.</title>
        <authorList>
            <person name="Deutscher J."/>
            <person name="Sauerwald H."/>
        </authorList>
    </citation>
    <scope>PHOSPHORYLATION AT HIS-231</scope>
</reference>
<proteinExistence type="evidence at protein level"/>
<feature type="initiator methionine" description="Removed" evidence="3">
    <location>
        <position position="1"/>
    </location>
</feature>
<feature type="chain" id="PRO_0000059455" description="Glycerol kinase">
    <location>
        <begin position="2"/>
        <end position="501"/>
    </location>
</feature>
<feature type="binding site" evidence="1">
    <location>
        <position position="14"/>
    </location>
    <ligand>
        <name>ADP</name>
        <dbReference type="ChEBI" id="CHEBI:456216"/>
    </ligand>
</feature>
<feature type="binding site" evidence="1">
    <location>
        <position position="14"/>
    </location>
    <ligand>
        <name>ATP</name>
        <dbReference type="ChEBI" id="CHEBI:30616"/>
    </ligand>
</feature>
<feature type="binding site" evidence="1">
    <location>
        <position position="14"/>
    </location>
    <ligand>
        <name>sn-glycerol 3-phosphate</name>
        <dbReference type="ChEBI" id="CHEBI:57597"/>
    </ligand>
</feature>
<feature type="binding site" evidence="1">
    <location>
        <position position="15"/>
    </location>
    <ligand>
        <name>ATP</name>
        <dbReference type="ChEBI" id="CHEBI:30616"/>
    </ligand>
</feature>
<feature type="binding site" evidence="1">
    <location>
        <position position="16"/>
    </location>
    <ligand>
        <name>ATP</name>
        <dbReference type="ChEBI" id="CHEBI:30616"/>
    </ligand>
</feature>
<feature type="binding site" evidence="1">
    <location>
        <position position="18"/>
    </location>
    <ligand>
        <name>ADP</name>
        <dbReference type="ChEBI" id="CHEBI:456216"/>
    </ligand>
</feature>
<feature type="binding site" evidence="1">
    <location>
        <position position="84"/>
    </location>
    <ligand>
        <name>glycerol</name>
        <dbReference type="ChEBI" id="CHEBI:17754"/>
    </ligand>
</feature>
<feature type="binding site" evidence="1">
    <location>
        <position position="84"/>
    </location>
    <ligand>
        <name>sn-glycerol 3-phosphate</name>
        <dbReference type="ChEBI" id="CHEBI:57597"/>
    </ligand>
</feature>
<feature type="binding site" evidence="1">
    <location>
        <position position="85"/>
    </location>
    <ligand>
        <name>glycerol</name>
        <dbReference type="ChEBI" id="CHEBI:17754"/>
    </ligand>
</feature>
<feature type="binding site" evidence="1">
    <location>
        <position position="85"/>
    </location>
    <ligand>
        <name>sn-glycerol 3-phosphate</name>
        <dbReference type="ChEBI" id="CHEBI:57597"/>
    </ligand>
</feature>
<feature type="binding site" evidence="1">
    <location>
        <position position="136"/>
    </location>
    <ligand>
        <name>glycerol</name>
        <dbReference type="ChEBI" id="CHEBI:17754"/>
    </ligand>
</feature>
<feature type="binding site" evidence="1">
    <location>
        <position position="136"/>
    </location>
    <ligand>
        <name>sn-glycerol 3-phosphate</name>
        <dbReference type="ChEBI" id="CHEBI:57597"/>
    </ligand>
</feature>
<feature type="binding site" evidence="1">
    <location>
        <position position="245"/>
    </location>
    <ligand>
        <name>glycerol</name>
        <dbReference type="ChEBI" id="CHEBI:17754"/>
    </ligand>
</feature>
<feature type="binding site" evidence="1">
    <location>
        <position position="245"/>
    </location>
    <ligand>
        <name>sn-glycerol 3-phosphate</name>
        <dbReference type="ChEBI" id="CHEBI:57597"/>
    </ligand>
</feature>
<feature type="binding site" evidence="1">
    <location>
        <position position="246"/>
    </location>
    <ligand>
        <name>glycerol</name>
        <dbReference type="ChEBI" id="CHEBI:17754"/>
    </ligand>
</feature>
<feature type="binding site" evidence="1">
    <location>
        <position position="267"/>
    </location>
    <ligand>
        <name>ADP</name>
        <dbReference type="ChEBI" id="CHEBI:456216"/>
    </ligand>
</feature>
<feature type="binding site" evidence="1">
    <location>
        <position position="267"/>
    </location>
    <ligand>
        <name>ATP</name>
        <dbReference type="ChEBI" id="CHEBI:30616"/>
    </ligand>
</feature>
<feature type="binding site" evidence="1">
    <location>
        <position position="310"/>
    </location>
    <ligand>
        <name>ADP</name>
        <dbReference type="ChEBI" id="CHEBI:456216"/>
    </ligand>
</feature>
<feature type="binding site" evidence="1">
    <location>
        <position position="310"/>
    </location>
    <ligand>
        <name>ATP</name>
        <dbReference type="ChEBI" id="CHEBI:30616"/>
    </ligand>
</feature>
<feature type="binding site" evidence="1">
    <location>
        <position position="314"/>
    </location>
    <ligand>
        <name>ATP</name>
        <dbReference type="ChEBI" id="CHEBI:30616"/>
    </ligand>
</feature>
<feature type="binding site" evidence="1">
    <location>
        <position position="411"/>
    </location>
    <ligand>
        <name>ADP</name>
        <dbReference type="ChEBI" id="CHEBI:456216"/>
    </ligand>
</feature>
<feature type="binding site" evidence="1">
    <location>
        <position position="411"/>
    </location>
    <ligand>
        <name>ATP</name>
        <dbReference type="ChEBI" id="CHEBI:30616"/>
    </ligand>
</feature>
<feature type="binding site" evidence="1">
    <location>
        <position position="415"/>
    </location>
    <ligand>
        <name>ADP</name>
        <dbReference type="ChEBI" id="CHEBI:456216"/>
    </ligand>
</feature>
<feature type="modified residue" description="Phosphohistidine; by HPr" evidence="1 2">
    <location>
        <position position="231"/>
    </location>
</feature>
<name>GLPK_ENTFA</name>
<accession>O34154</accession>
<comment type="function">
    <text evidence="1 3">Key enzyme in the regulation of glycerol uptake and metabolism. Catalyzes the phosphorylation of glycerol to yield sn-glycerol 3-phosphate.</text>
</comment>
<comment type="catalytic activity">
    <reaction evidence="1">
        <text>glycerol + ATP = sn-glycerol 3-phosphate + ADP + H(+)</text>
        <dbReference type="Rhea" id="RHEA:21644"/>
        <dbReference type="ChEBI" id="CHEBI:15378"/>
        <dbReference type="ChEBI" id="CHEBI:17754"/>
        <dbReference type="ChEBI" id="CHEBI:30616"/>
        <dbReference type="ChEBI" id="CHEBI:57597"/>
        <dbReference type="ChEBI" id="CHEBI:456216"/>
        <dbReference type="EC" id="2.7.1.30"/>
    </reaction>
</comment>
<comment type="activity regulation">
    <text evidence="1 3">Activated by phosphorylation and inhibited by fructose 1,6-bisphosphate (FBP).</text>
</comment>
<comment type="pathway">
    <text evidence="1">Polyol metabolism; glycerol degradation via glycerol kinase pathway; sn-glycerol 3-phosphate from glycerol: step 1/1.</text>
</comment>
<comment type="subunit">
    <text evidence="1">Homotetramer and homodimer (in equilibrium).</text>
</comment>
<comment type="PTM">
    <text evidence="2">The phosphoenolpyruvate-dependent sugar phosphotransferase system (PTS), including enzyme I, and histidine-containing protein (HPr) are required for the phosphorylation of His-231, which leads to the activation of the enzyme.</text>
</comment>
<comment type="similarity">
    <text evidence="1">Belongs to the FGGY kinase family.</text>
</comment>